<protein>
    <recommendedName>
        <fullName>Nuclear RNA export factor 2</fullName>
    </recommendedName>
    <alternativeName>
        <fullName>Cancer/testis antigen 39</fullName>
        <shortName>CT39</shortName>
    </alternativeName>
    <alternativeName>
        <fullName>TAP-like protein 2</fullName>
        <shortName>TAPL-2</shortName>
    </alternativeName>
</protein>
<organism>
    <name type="scientific">Homo sapiens</name>
    <name type="common">Human</name>
    <dbReference type="NCBI Taxonomy" id="9606"/>
    <lineage>
        <taxon>Eukaryota</taxon>
        <taxon>Metazoa</taxon>
        <taxon>Chordata</taxon>
        <taxon>Craniata</taxon>
        <taxon>Vertebrata</taxon>
        <taxon>Euteleostomi</taxon>
        <taxon>Mammalia</taxon>
        <taxon>Eutheria</taxon>
        <taxon>Euarchontoglires</taxon>
        <taxon>Primates</taxon>
        <taxon>Haplorrhini</taxon>
        <taxon>Catarrhini</taxon>
        <taxon>Hominidae</taxon>
        <taxon>Homo</taxon>
    </lineage>
</organism>
<evidence type="ECO:0000255" key="1">
    <source>
        <dbReference type="PROSITE-ProRule" id="PRU00137"/>
    </source>
</evidence>
<evidence type="ECO:0000255" key="2">
    <source>
        <dbReference type="PROSITE-ProRule" id="PRU00611"/>
    </source>
</evidence>
<evidence type="ECO:0000269" key="3">
    <source>
    </source>
</evidence>
<evidence type="ECO:0000269" key="4">
    <source>
    </source>
</evidence>
<evidence type="ECO:0000269" key="5">
    <source>
    </source>
</evidence>
<evidence type="ECO:0000269" key="6">
    <source>
    </source>
</evidence>
<evidence type="ECO:0000305" key="7"/>
<evidence type="ECO:0007744" key="8">
    <source>
    </source>
</evidence>
<comment type="function">
    <text>Involved in the export of mRNA from the nucleus to the cytoplasm.</text>
</comment>
<comment type="subunit">
    <text evidence="3 6">Interacts with NXT1, NXT2, E1B-AP5, the REF proteins and with nucleoporins, Nup62, Nup153 and Nup214. Interacts with LUZP4.</text>
</comment>
<comment type="interaction">
    <interactant intactId="EBI-444173">
        <id>Q9GZY0</id>
    </interactant>
    <interactant intactId="EBI-7133736">
        <id>P07686</id>
        <label>HEXB</label>
    </interactant>
    <organismsDiffer>false</organismsDiffer>
    <experiments>3</experiments>
</comment>
<comment type="interaction">
    <interactant intactId="EBI-444173">
        <id>Q9GZY0</id>
    </interactant>
    <interactant intactId="EBI-10698339">
        <id>Q9NPJ8-3</id>
        <label>NXT2</label>
    </interactant>
    <organismsDiffer>false</organismsDiffer>
    <experiments>3</experiments>
</comment>
<comment type="subcellular location">
    <subcellularLocation>
        <location>Nucleus</location>
        <location>Nucleoplasm</location>
    </subcellularLocation>
    <subcellularLocation>
        <location>Cytoplasm</location>
    </subcellularLocation>
    <text>Localized in the nucleoplasm and at the nuclear envelope. Shuttles between the nucleus and the cytoplasm.</text>
</comment>
<comment type="tissue specificity">
    <text evidence="5">Expressed almost exclusively in testis. Also expressed in several cancers.</text>
</comment>
<comment type="domain">
    <text>The NTF2 domain heterodimerizes with NXT1 and NXT2. The formation of NXF1/NXT1 heterodimers is required for NXF2-mediated nuclear mRNA export.</text>
</comment>
<comment type="domain">
    <text>The leucine-rich repeats and the NTF2-domain are essential for the export of mRNA from the nucleus.</text>
</comment>
<comment type="domain">
    <text>The C-terminal fragment, containing the TAP domain (also called UBA-like domain) and part of the NTF2-like domain, named the NPC-binding domain, mediates direct interactions with nucleoporin-FG-repeats and is necessary and sufficient for localization of NXF2 to the nuclear rim.</text>
</comment>
<comment type="domain">
    <text>The RNA-binding domain is a non-canonical RNP-type domain.</text>
</comment>
<comment type="similarity">
    <text evidence="7">Belongs to the NXF family.</text>
</comment>
<comment type="sequence caution" evidence="7">
    <conflict type="erroneous initiation">
        <sequence resource="EMBL-CDS" id="AAK31975"/>
    </conflict>
</comment>
<comment type="sequence caution" evidence="7">
    <conflict type="erroneous initiation">
        <sequence resource="EMBL-CDS" id="BAA91154"/>
    </conflict>
</comment>
<comment type="sequence caution" evidence="7">
    <conflict type="miscellaneous discrepancy">
        <sequence resource="EMBL-CDS" id="CAB75659"/>
    </conflict>
    <text>The sequence differs from that shown due to either intron retention or a splicing event.</text>
</comment>
<reference key="1">
    <citation type="journal article" date="2000" name="Mol. Cell. Biol.">
        <title>TAP (NXF1) belongs to a multigene family of putative RNA export factors with a conserved modular architecture.</title>
        <authorList>
            <person name="Herold A."/>
            <person name="Suyama M."/>
            <person name="Rodrigues J.P."/>
            <person name="Braun I.C."/>
            <person name="Kutay U."/>
            <person name="Carmo-Fonseca M."/>
            <person name="Bork P."/>
            <person name="Izaurralde E."/>
        </authorList>
    </citation>
    <scope>NUCLEOTIDE SEQUENCE [MRNA]</scope>
    <scope>MUTAGENESIS</scope>
    <source>
        <tissue>Testis</tissue>
    </source>
</reference>
<reference key="2">
    <citation type="journal article" date="2001" name="Curr. Biol.">
        <title>NXF5, a novel member of the nuclear RNA export factor family, is lost in a male patient with a syndromic form of mental retardation.</title>
        <authorList>
            <person name="Jun L."/>
            <person name="Frints S."/>
            <person name="Duhamel H."/>
            <person name="Herold A."/>
            <person name="Abad-Rodrigues J."/>
            <person name="Dotti C."/>
            <person name="Izaurralde E."/>
            <person name="Marynen P."/>
            <person name="Froyen G."/>
        </authorList>
    </citation>
    <scope>NUCLEOTIDE SEQUENCE [MRNA]</scope>
    <source>
        <tissue>Fetal brain</tissue>
    </source>
</reference>
<reference key="3">
    <citation type="journal article" date="2007" name="BMC Genomics">
        <title>The full-ORF clone resource of the German cDNA consortium.</title>
        <authorList>
            <person name="Bechtel S."/>
            <person name="Rosenfelder H."/>
            <person name="Duda A."/>
            <person name="Schmidt C.P."/>
            <person name="Ernst U."/>
            <person name="Wellenreuther R."/>
            <person name="Mehrle A."/>
            <person name="Schuster C."/>
            <person name="Bahr A."/>
            <person name="Bloecker H."/>
            <person name="Heubner D."/>
            <person name="Hoerlein A."/>
            <person name="Michel G."/>
            <person name="Wedler H."/>
            <person name="Koehrer K."/>
            <person name="Ottenwaelder B."/>
            <person name="Poustka A."/>
            <person name="Wiemann S."/>
            <person name="Schupp I."/>
        </authorList>
    </citation>
    <scope>NUCLEOTIDE SEQUENCE [LARGE SCALE MRNA]</scope>
    <source>
        <tissue>Testis</tissue>
    </source>
</reference>
<reference key="4">
    <citation type="journal article" date="2005" name="Nature">
        <title>The DNA sequence of the human X chromosome.</title>
        <authorList>
            <person name="Ross M.T."/>
            <person name="Grafham D.V."/>
            <person name="Coffey A.J."/>
            <person name="Scherer S."/>
            <person name="McLay K."/>
            <person name="Muzny D."/>
            <person name="Platzer M."/>
            <person name="Howell G.R."/>
            <person name="Burrows C."/>
            <person name="Bird C.P."/>
            <person name="Frankish A."/>
            <person name="Lovell F.L."/>
            <person name="Howe K.L."/>
            <person name="Ashurst J.L."/>
            <person name="Fulton R.S."/>
            <person name="Sudbrak R."/>
            <person name="Wen G."/>
            <person name="Jones M.C."/>
            <person name="Hurles M.E."/>
            <person name="Andrews T.D."/>
            <person name="Scott C.E."/>
            <person name="Searle S."/>
            <person name="Ramser J."/>
            <person name="Whittaker A."/>
            <person name="Deadman R."/>
            <person name="Carter N.P."/>
            <person name="Hunt S.E."/>
            <person name="Chen R."/>
            <person name="Cree A."/>
            <person name="Gunaratne P."/>
            <person name="Havlak P."/>
            <person name="Hodgson A."/>
            <person name="Metzker M.L."/>
            <person name="Richards S."/>
            <person name="Scott G."/>
            <person name="Steffen D."/>
            <person name="Sodergren E."/>
            <person name="Wheeler D.A."/>
            <person name="Worley K.C."/>
            <person name="Ainscough R."/>
            <person name="Ambrose K.D."/>
            <person name="Ansari-Lari M.A."/>
            <person name="Aradhya S."/>
            <person name="Ashwell R.I."/>
            <person name="Babbage A.K."/>
            <person name="Bagguley C.L."/>
            <person name="Ballabio A."/>
            <person name="Banerjee R."/>
            <person name="Barker G.E."/>
            <person name="Barlow K.F."/>
            <person name="Barrett I.P."/>
            <person name="Bates K.N."/>
            <person name="Beare D.M."/>
            <person name="Beasley H."/>
            <person name="Beasley O."/>
            <person name="Beck A."/>
            <person name="Bethel G."/>
            <person name="Blechschmidt K."/>
            <person name="Brady N."/>
            <person name="Bray-Allen S."/>
            <person name="Bridgeman A.M."/>
            <person name="Brown A.J."/>
            <person name="Brown M.J."/>
            <person name="Bonnin D."/>
            <person name="Bruford E.A."/>
            <person name="Buhay C."/>
            <person name="Burch P."/>
            <person name="Burford D."/>
            <person name="Burgess J."/>
            <person name="Burrill W."/>
            <person name="Burton J."/>
            <person name="Bye J.M."/>
            <person name="Carder C."/>
            <person name="Carrel L."/>
            <person name="Chako J."/>
            <person name="Chapman J.C."/>
            <person name="Chavez D."/>
            <person name="Chen E."/>
            <person name="Chen G."/>
            <person name="Chen Y."/>
            <person name="Chen Z."/>
            <person name="Chinault C."/>
            <person name="Ciccodicola A."/>
            <person name="Clark S.Y."/>
            <person name="Clarke G."/>
            <person name="Clee C.M."/>
            <person name="Clegg S."/>
            <person name="Clerc-Blankenburg K."/>
            <person name="Clifford K."/>
            <person name="Cobley V."/>
            <person name="Cole C.G."/>
            <person name="Conquer J.S."/>
            <person name="Corby N."/>
            <person name="Connor R.E."/>
            <person name="David R."/>
            <person name="Davies J."/>
            <person name="Davis C."/>
            <person name="Davis J."/>
            <person name="Delgado O."/>
            <person name="Deshazo D."/>
            <person name="Dhami P."/>
            <person name="Ding Y."/>
            <person name="Dinh H."/>
            <person name="Dodsworth S."/>
            <person name="Draper H."/>
            <person name="Dugan-Rocha S."/>
            <person name="Dunham A."/>
            <person name="Dunn M."/>
            <person name="Durbin K.J."/>
            <person name="Dutta I."/>
            <person name="Eades T."/>
            <person name="Ellwood M."/>
            <person name="Emery-Cohen A."/>
            <person name="Errington H."/>
            <person name="Evans K.L."/>
            <person name="Faulkner L."/>
            <person name="Francis F."/>
            <person name="Frankland J."/>
            <person name="Fraser A.E."/>
            <person name="Galgoczy P."/>
            <person name="Gilbert J."/>
            <person name="Gill R."/>
            <person name="Gloeckner G."/>
            <person name="Gregory S.G."/>
            <person name="Gribble S."/>
            <person name="Griffiths C."/>
            <person name="Grocock R."/>
            <person name="Gu Y."/>
            <person name="Gwilliam R."/>
            <person name="Hamilton C."/>
            <person name="Hart E.A."/>
            <person name="Hawes A."/>
            <person name="Heath P.D."/>
            <person name="Heitmann K."/>
            <person name="Hennig S."/>
            <person name="Hernandez J."/>
            <person name="Hinzmann B."/>
            <person name="Ho S."/>
            <person name="Hoffs M."/>
            <person name="Howden P.J."/>
            <person name="Huckle E.J."/>
            <person name="Hume J."/>
            <person name="Hunt P.J."/>
            <person name="Hunt A.R."/>
            <person name="Isherwood J."/>
            <person name="Jacob L."/>
            <person name="Johnson D."/>
            <person name="Jones S."/>
            <person name="de Jong P.J."/>
            <person name="Joseph S.S."/>
            <person name="Keenan S."/>
            <person name="Kelly S."/>
            <person name="Kershaw J.K."/>
            <person name="Khan Z."/>
            <person name="Kioschis P."/>
            <person name="Klages S."/>
            <person name="Knights A.J."/>
            <person name="Kosiura A."/>
            <person name="Kovar-Smith C."/>
            <person name="Laird G.K."/>
            <person name="Langford C."/>
            <person name="Lawlor S."/>
            <person name="Leversha M."/>
            <person name="Lewis L."/>
            <person name="Liu W."/>
            <person name="Lloyd C."/>
            <person name="Lloyd D.M."/>
            <person name="Loulseged H."/>
            <person name="Loveland J.E."/>
            <person name="Lovell J.D."/>
            <person name="Lozado R."/>
            <person name="Lu J."/>
            <person name="Lyne R."/>
            <person name="Ma J."/>
            <person name="Maheshwari M."/>
            <person name="Matthews L.H."/>
            <person name="McDowall J."/>
            <person name="McLaren S."/>
            <person name="McMurray A."/>
            <person name="Meidl P."/>
            <person name="Meitinger T."/>
            <person name="Milne S."/>
            <person name="Miner G."/>
            <person name="Mistry S.L."/>
            <person name="Morgan M."/>
            <person name="Morris S."/>
            <person name="Mueller I."/>
            <person name="Mullikin J.C."/>
            <person name="Nguyen N."/>
            <person name="Nordsiek G."/>
            <person name="Nyakatura G."/>
            <person name="O'dell C.N."/>
            <person name="Okwuonu G."/>
            <person name="Palmer S."/>
            <person name="Pandian R."/>
            <person name="Parker D."/>
            <person name="Parrish J."/>
            <person name="Pasternak S."/>
            <person name="Patel D."/>
            <person name="Pearce A.V."/>
            <person name="Pearson D.M."/>
            <person name="Pelan S.E."/>
            <person name="Perez L."/>
            <person name="Porter K.M."/>
            <person name="Ramsey Y."/>
            <person name="Reichwald K."/>
            <person name="Rhodes S."/>
            <person name="Ridler K.A."/>
            <person name="Schlessinger D."/>
            <person name="Schueler M.G."/>
            <person name="Sehra H.K."/>
            <person name="Shaw-Smith C."/>
            <person name="Shen H."/>
            <person name="Sheridan E.M."/>
            <person name="Shownkeen R."/>
            <person name="Skuce C.D."/>
            <person name="Smith M.L."/>
            <person name="Sotheran E.C."/>
            <person name="Steingruber H.E."/>
            <person name="Steward C.A."/>
            <person name="Storey R."/>
            <person name="Swann R.M."/>
            <person name="Swarbreck D."/>
            <person name="Tabor P.E."/>
            <person name="Taudien S."/>
            <person name="Taylor T."/>
            <person name="Teague B."/>
            <person name="Thomas K."/>
            <person name="Thorpe A."/>
            <person name="Timms K."/>
            <person name="Tracey A."/>
            <person name="Trevanion S."/>
            <person name="Tromans A.C."/>
            <person name="d'Urso M."/>
            <person name="Verduzco D."/>
            <person name="Villasana D."/>
            <person name="Waldron L."/>
            <person name="Wall M."/>
            <person name="Wang Q."/>
            <person name="Warren J."/>
            <person name="Warry G.L."/>
            <person name="Wei X."/>
            <person name="West A."/>
            <person name="Whitehead S.L."/>
            <person name="Whiteley M.N."/>
            <person name="Wilkinson J.E."/>
            <person name="Willey D.L."/>
            <person name="Williams G."/>
            <person name="Williams L."/>
            <person name="Williamson A."/>
            <person name="Williamson H."/>
            <person name="Wilming L."/>
            <person name="Woodmansey R.L."/>
            <person name="Wray P.W."/>
            <person name="Yen J."/>
            <person name="Zhang J."/>
            <person name="Zhou J."/>
            <person name="Zoghbi H."/>
            <person name="Zorilla S."/>
            <person name="Buck D."/>
            <person name="Reinhardt R."/>
            <person name="Poustka A."/>
            <person name="Rosenthal A."/>
            <person name="Lehrach H."/>
            <person name="Meindl A."/>
            <person name="Minx P.J."/>
            <person name="Hillier L.W."/>
            <person name="Willard H.F."/>
            <person name="Wilson R.K."/>
            <person name="Waterston R.H."/>
            <person name="Rice C.M."/>
            <person name="Vaudin M."/>
            <person name="Coulson A."/>
            <person name="Nelson D.L."/>
            <person name="Weinstock G."/>
            <person name="Sulston J.E."/>
            <person name="Durbin R.M."/>
            <person name="Hubbard T."/>
            <person name="Gibbs R.A."/>
            <person name="Beck S."/>
            <person name="Rogers J."/>
            <person name="Bentley D.R."/>
        </authorList>
    </citation>
    <scope>NUCLEOTIDE SEQUENCE [LARGE SCALE GENOMIC DNA]</scope>
</reference>
<reference key="5">
    <citation type="journal article" date="2004" name="Genome Res.">
        <title>The status, quality, and expansion of the NIH full-length cDNA project: the Mammalian Gene Collection (MGC).</title>
        <authorList>
            <consortium name="The MGC Project Team"/>
        </authorList>
    </citation>
    <scope>NUCLEOTIDE SEQUENCE [LARGE SCALE MRNA]</scope>
    <source>
        <tissue>Skin</tissue>
    </source>
</reference>
<reference key="6">
    <citation type="journal article" date="2001" name="Nat. Genet.">
        <title>An abundance of X-linked genes expressed in spermatogonia.</title>
        <authorList>
            <person name="Wang P.J."/>
            <person name="McCarrey J.R."/>
            <person name="Yang F."/>
            <person name="Page D.C."/>
        </authorList>
    </citation>
    <scope>NUCLEOTIDE SEQUENCE [MRNA] OF 30-626</scope>
    <source>
        <tissue>Testis</tissue>
    </source>
</reference>
<reference key="7">
    <citation type="journal article" date="2004" name="Nat. Genet.">
        <title>Complete sequencing and characterization of 21,243 full-length human cDNAs.</title>
        <authorList>
            <person name="Ota T."/>
            <person name="Suzuki Y."/>
            <person name="Nishikawa T."/>
            <person name="Otsuki T."/>
            <person name="Sugiyama T."/>
            <person name="Irie R."/>
            <person name="Wakamatsu A."/>
            <person name="Hayashi K."/>
            <person name="Sato H."/>
            <person name="Nagai K."/>
            <person name="Kimura K."/>
            <person name="Makita H."/>
            <person name="Sekine M."/>
            <person name="Obayashi M."/>
            <person name="Nishi T."/>
            <person name="Shibahara T."/>
            <person name="Tanaka T."/>
            <person name="Ishii S."/>
            <person name="Yamamoto J."/>
            <person name="Saito K."/>
            <person name="Kawai Y."/>
            <person name="Isono Y."/>
            <person name="Nakamura Y."/>
            <person name="Nagahari K."/>
            <person name="Murakami K."/>
            <person name="Yasuda T."/>
            <person name="Iwayanagi T."/>
            <person name="Wagatsuma M."/>
            <person name="Shiratori A."/>
            <person name="Sudo H."/>
            <person name="Hosoiri T."/>
            <person name="Kaku Y."/>
            <person name="Kodaira H."/>
            <person name="Kondo H."/>
            <person name="Sugawara M."/>
            <person name="Takahashi M."/>
            <person name="Kanda K."/>
            <person name="Yokoi T."/>
            <person name="Furuya T."/>
            <person name="Kikkawa E."/>
            <person name="Omura Y."/>
            <person name="Abe K."/>
            <person name="Kamihara K."/>
            <person name="Katsuta N."/>
            <person name="Sato K."/>
            <person name="Tanikawa M."/>
            <person name="Yamazaki M."/>
            <person name="Ninomiya K."/>
            <person name="Ishibashi T."/>
            <person name="Yamashita H."/>
            <person name="Murakawa K."/>
            <person name="Fujimori K."/>
            <person name="Tanai H."/>
            <person name="Kimata M."/>
            <person name="Watanabe M."/>
            <person name="Hiraoka S."/>
            <person name="Chiba Y."/>
            <person name="Ishida S."/>
            <person name="Ono Y."/>
            <person name="Takiguchi S."/>
            <person name="Watanabe S."/>
            <person name="Yosida M."/>
            <person name="Hotuta T."/>
            <person name="Kusano J."/>
            <person name="Kanehori K."/>
            <person name="Takahashi-Fujii A."/>
            <person name="Hara H."/>
            <person name="Tanase T.-O."/>
            <person name="Nomura Y."/>
            <person name="Togiya S."/>
            <person name="Komai F."/>
            <person name="Hara R."/>
            <person name="Takeuchi K."/>
            <person name="Arita M."/>
            <person name="Imose N."/>
            <person name="Musashino K."/>
            <person name="Yuuki H."/>
            <person name="Oshima A."/>
            <person name="Sasaki N."/>
            <person name="Aotsuka S."/>
            <person name="Yoshikawa Y."/>
            <person name="Matsunawa H."/>
            <person name="Ichihara T."/>
            <person name="Shiohata N."/>
            <person name="Sano S."/>
            <person name="Moriya S."/>
            <person name="Momiyama H."/>
            <person name="Satoh N."/>
            <person name="Takami S."/>
            <person name="Terashima Y."/>
            <person name="Suzuki O."/>
            <person name="Nakagawa S."/>
            <person name="Senoh A."/>
            <person name="Mizoguchi H."/>
            <person name="Goto Y."/>
            <person name="Shimizu F."/>
            <person name="Wakebe H."/>
            <person name="Hishigaki H."/>
            <person name="Watanabe T."/>
            <person name="Sugiyama A."/>
            <person name="Takemoto M."/>
            <person name="Kawakami B."/>
            <person name="Yamazaki M."/>
            <person name="Watanabe K."/>
            <person name="Kumagai A."/>
            <person name="Itakura S."/>
            <person name="Fukuzumi Y."/>
            <person name="Fujimori Y."/>
            <person name="Komiyama M."/>
            <person name="Tashiro H."/>
            <person name="Tanigami A."/>
            <person name="Fujiwara T."/>
            <person name="Ono T."/>
            <person name="Yamada K."/>
            <person name="Fujii Y."/>
            <person name="Ozaki K."/>
            <person name="Hirao M."/>
            <person name="Ohmori Y."/>
            <person name="Kawabata A."/>
            <person name="Hikiji T."/>
            <person name="Kobatake N."/>
            <person name="Inagaki H."/>
            <person name="Ikema Y."/>
            <person name="Okamoto S."/>
            <person name="Okitani R."/>
            <person name="Kawakami T."/>
            <person name="Noguchi S."/>
            <person name="Itoh T."/>
            <person name="Shigeta K."/>
            <person name="Senba T."/>
            <person name="Matsumura K."/>
            <person name="Nakajima Y."/>
            <person name="Mizuno T."/>
            <person name="Morinaga M."/>
            <person name="Sasaki M."/>
            <person name="Togashi T."/>
            <person name="Oyama M."/>
            <person name="Hata H."/>
            <person name="Watanabe M."/>
            <person name="Komatsu T."/>
            <person name="Mizushima-Sugano J."/>
            <person name="Satoh T."/>
            <person name="Shirai Y."/>
            <person name="Takahashi Y."/>
            <person name="Nakagawa K."/>
            <person name="Okumura K."/>
            <person name="Nagase T."/>
            <person name="Nomura N."/>
            <person name="Kikuchi H."/>
            <person name="Masuho Y."/>
            <person name="Yamashita R."/>
            <person name="Nakai K."/>
            <person name="Yada T."/>
            <person name="Nakamura Y."/>
            <person name="Ohara O."/>
            <person name="Isogai T."/>
            <person name="Sugano S."/>
        </authorList>
    </citation>
    <scope>NUCLEOTIDE SEQUENCE [LARGE SCALE MRNA] OF 98-626</scope>
</reference>
<reference key="8">
    <citation type="journal article" date="1999" name="Mol. Cell. Biol.">
        <title>Identification of an NTF2-related factor that binds Ran-GTP and regulates nuclear protein export.</title>
        <authorList>
            <person name="Black B.E."/>
            <person name="Levesque L."/>
            <person name="Holaska J.M."/>
            <person name="Wood T.C."/>
            <person name="Paschal B.M."/>
        </authorList>
    </citation>
    <scope>INTERACTION WITH NXT1</scope>
</reference>
<reference key="9">
    <citation type="journal article" date="2003" name="Int. J. Cancer">
        <title>Five new human cancer-germline genes identified among 12 genes expressed in spermatogonia.</title>
        <authorList>
            <person name="Loriot A."/>
            <person name="Boon T."/>
            <person name="De Smet C."/>
        </authorList>
    </citation>
    <scope>TISSUE SPECIFICITY</scope>
    <scope>IDENTIFICATION AS A CANCER/TESTIS ANTIGEN</scope>
</reference>
<reference key="10">
    <citation type="journal article" date="2013" name="J. Proteome Res.">
        <title>Toward a comprehensive characterization of a human cancer cell phosphoproteome.</title>
        <authorList>
            <person name="Zhou H."/>
            <person name="Di Palma S."/>
            <person name="Preisinger C."/>
            <person name="Peng M."/>
            <person name="Polat A.N."/>
            <person name="Heck A.J."/>
            <person name="Mohammed S."/>
        </authorList>
    </citation>
    <scope>PHOSPHORYLATION [LARGE SCALE ANALYSIS] AT SER-34</scope>
    <scope>IDENTIFICATION BY MASS SPECTROMETRY [LARGE SCALE ANALYSIS]</scope>
    <source>
        <tissue>Erythroleukemia</tissue>
    </source>
</reference>
<reference key="11">
    <citation type="journal article" date="2015" name="Nucleic Acids Res.">
        <title>Luzp4 defines a new mRNA export pathway in cancer cells.</title>
        <authorList>
            <person name="Viphakone N."/>
            <person name="Cumberbatch M.G."/>
            <person name="Livingstone M.J."/>
            <person name="Heath P.R."/>
            <person name="Dickman M.J."/>
            <person name="Catto J.W."/>
            <person name="Wilson S.A."/>
        </authorList>
    </citation>
    <scope>INTERACTION WITH LUZP4</scope>
</reference>
<sequence>MCSTLKKCGTYRTEVAECHDHGSTFQGRKKGGSSFRDNFDKRSCHYEHGGYERPPSHCQENDGSVEMRDVHKDQQLRHTPYSIRCERRMKWHSEDEIRITTWRNRKPPERKMSQNTQDGYTRNWFKVTIPYGIKYDKAWLMNSIQSHCSDRFTPVDFHYVRNRACFFVQDASAASALKDVSYKIYDDENQKICIFVNHSTAPYSVKNKLKPGQMEMLKLTMNKRYNVSQQALDLQNLRFDPDLMGRDIDIILNRRNCMAATLKIIERNFPELLSLNLCNNKLYQLDGLSDITEKAPKVKTLNLSKNKLESAWELGKVKGLKLEELWLEGNPLCSTFSDQSAYVSAIRDCFPKLLRLDGRELSAPVIVDIDSSETMKPCKENFTGSETLKHLVLQFLQQYYSIYDSGDRQGLLGAYHDEACFSLAIPFDPKDSAPSSLCKYFEDSRNMKTLKDPYLKGELLRRTKRDIVDSLSALPKTQHDLSSILVDVWCQTERMLCFSVNGVFKEVEGQSQGSVLAFTRTFIATPGSSSSLCIVNDELFVRDASPQETQSAFSIPVSTLSSSSEPSLSQEQQEMVQAFSAQSGMKLEWSQKCLQDNEWNYTRAGQAFTMLQTEGKIPAEAFKQIS</sequence>
<gene>
    <name type="primary">NXF2</name>
    <name type="synonym">TAPL2</name>
</gene>
<gene>
    <name type="primary">NXF2B</name>
</gene>
<dbReference type="EMBL" id="AJ277526">
    <property type="protein sequence ID" value="CAC16588.1"/>
    <property type="molecule type" value="mRNA"/>
</dbReference>
<dbReference type="EMBL" id="AJ277659">
    <property type="protein sequence ID" value="CAC20433.1"/>
    <property type="molecule type" value="mRNA"/>
</dbReference>
<dbReference type="EMBL" id="AL157436">
    <property type="protein sequence ID" value="CAB75659.1"/>
    <property type="status" value="ALT_SEQ"/>
    <property type="molecule type" value="mRNA"/>
</dbReference>
<dbReference type="EMBL" id="Z81367">
    <property type="protein sequence ID" value="CAI42026.1"/>
    <property type="molecule type" value="Genomic_DNA"/>
</dbReference>
<dbReference type="EMBL" id="AL590069">
    <property type="protein sequence ID" value="CAD13494.1"/>
    <property type="molecule type" value="Genomic_DNA"/>
</dbReference>
<dbReference type="EMBL" id="BC015020">
    <property type="protein sequence ID" value="AAH15020.1"/>
    <property type="molecule type" value="mRNA"/>
</dbReference>
<dbReference type="EMBL" id="AF285596">
    <property type="protein sequence ID" value="AAK31975.1"/>
    <property type="status" value="ALT_INIT"/>
    <property type="molecule type" value="mRNA"/>
</dbReference>
<dbReference type="EMBL" id="AK000423">
    <property type="protein sequence ID" value="BAA91154.1"/>
    <property type="status" value="ALT_INIT"/>
    <property type="molecule type" value="mRNA"/>
</dbReference>
<dbReference type="CCDS" id="CCDS14497.1"/>
<dbReference type="CCDS" id="CCDS43979.1"/>
<dbReference type="RefSeq" id="NP_001093156.1">
    <property type="nucleotide sequence ID" value="NM_001099686.2"/>
</dbReference>
<dbReference type="RefSeq" id="NP_071336.1">
    <property type="nucleotide sequence ID" value="NM_022053.4"/>
</dbReference>
<dbReference type="SMR" id="Q9GZY0"/>
<dbReference type="BioGRID" id="121026">
    <property type="interactions" value="64"/>
</dbReference>
<dbReference type="BioGRID" id="608771">
    <property type="interactions" value="4"/>
</dbReference>
<dbReference type="ComplexPortal" id="CPX-2401">
    <property type="entry name" value="NXF2-NXT2 mRNA nuclear export factor complex"/>
</dbReference>
<dbReference type="ComplexPortal" id="CPX-925">
    <property type="entry name" value="NXF2-NXT1 mRNA nuclear export factor complex"/>
</dbReference>
<dbReference type="FunCoup" id="Q9GZY0">
    <property type="interactions" value="1328"/>
</dbReference>
<dbReference type="IntAct" id="Q9GZY0">
    <property type="interactions" value="56"/>
</dbReference>
<dbReference type="STRING" id="9606.ENSP00000472530"/>
<dbReference type="GlyGen" id="Q9GZY0">
    <property type="glycosylation" value="1 site, 1 O-linked glycan (1 site)"/>
</dbReference>
<dbReference type="iPTMnet" id="Q9GZY0"/>
<dbReference type="PhosphoSitePlus" id="Q9GZY0"/>
<dbReference type="SwissPalm" id="Q9GZY0"/>
<dbReference type="BioMuta" id="NXF2B"/>
<dbReference type="DMDM" id="20978536"/>
<dbReference type="jPOST" id="Q9GZY0"/>
<dbReference type="MassIVE" id="Q9GZY0"/>
<dbReference type="PaxDb" id="9606-ENSP00000484645"/>
<dbReference type="PeptideAtlas" id="Q9GZY0"/>
<dbReference type="ProteomicsDB" id="80171"/>
<dbReference type="Pumba" id="Q9GZY0"/>
<dbReference type="Antibodypedia" id="72780">
    <property type="antibodies" value="66 antibodies from 19 providers"/>
</dbReference>
<dbReference type="Antibodypedia" id="77042">
    <property type="antibodies" value="2 antibodies from 2 providers"/>
</dbReference>
<dbReference type="DNASU" id="56001"/>
<dbReference type="Ensembl" id="ENST00000602195.6">
    <property type="protein sequence ID" value="ENSP00000472530.1"/>
    <property type="gene ID" value="ENSG00000269437.8"/>
</dbReference>
<dbReference type="Ensembl" id="ENST00000604395.5">
    <property type="protein sequence ID" value="ENSP00000474659.2"/>
    <property type="gene ID" value="ENSG00000269437.8"/>
</dbReference>
<dbReference type="Ensembl" id="ENST00000604790.2">
    <property type="protein sequence ID" value="ENSP00000474598.2"/>
    <property type="gene ID" value="ENSG00000269405.7"/>
</dbReference>
<dbReference type="Ensembl" id="ENST00000625106.4">
    <property type="protein sequence ID" value="ENSP00000485586.2"/>
    <property type="gene ID" value="ENSG00000269405.7"/>
</dbReference>
<dbReference type="GeneID" id="56001"/>
<dbReference type="GeneID" id="728343"/>
<dbReference type="KEGG" id="hsa:56001"/>
<dbReference type="KEGG" id="hsa:728343"/>
<dbReference type="MANE-Select" id="ENST00000602195.6">
    <property type="protein sequence ID" value="ENSP00000472530.1"/>
    <property type="RefSeq nucleotide sequence ID" value="NM_001099686.3"/>
    <property type="RefSeq protein sequence ID" value="NP_001093156.1"/>
</dbReference>
<dbReference type="MANE-Select" id="ENST00000625106.4">
    <property type="protein sequence ID" value="ENSP00000485586.2"/>
    <property type="RefSeq nucleotide sequence ID" value="NM_022053.4"/>
    <property type="RefSeq protein sequence ID" value="NP_071336.1"/>
</dbReference>
<dbReference type="UCSC" id="uc004eix.5">
    <property type="organism name" value="human"/>
</dbReference>
<dbReference type="AGR" id="HGNC:23984"/>
<dbReference type="AGR" id="HGNC:8072"/>
<dbReference type="CTD" id="56001"/>
<dbReference type="CTD" id="728343"/>
<dbReference type="DisGeNET" id="56001"/>
<dbReference type="DisGeNET" id="728343"/>
<dbReference type="GeneCards" id="NXF2"/>
<dbReference type="GeneCards" id="NXF2B"/>
<dbReference type="HGNC" id="HGNC:8072">
    <property type="gene designation" value="NXF2"/>
</dbReference>
<dbReference type="HGNC" id="HGNC:23984">
    <property type="gene designation" value="NXF2B"/>
</dbReference>
<dbReference type="HPA" id="ENSG00000269405">
    <property type="expression patterns" value="Tissue enhanced (epididymis, testis)"/>
</dbReference>
<dbReference type="HPA" id="ENSG00000269437">
    <property type="expression patterns" value="Group enriched (epididymis, testis)"/>
</dbReference>
<dbReference type="MIM" id="300315">
    <property type="type" value="gene"/>
</dbReference>
<dbReference type="neXtProt" id="NX_Q9GZY0"/>
<dbReference type="OpenTargets" id="ENSG00000269405"/>
<dbReference type="OpenTargets" id="ENSG00000269437"/>
<dbReference type="PharmGKB" id="PA162398310"/>
<dbReference type="VEuPathDB" id="HostDB:ENSG00000269405"/>
<dbReference type="VEuPathDB" id="HostDB:ENSG00000269437"/>
<dbReference type="eggNOG" id="KOG3763">
    <property type="taxonomic scope" value="Eukaryota"/>
</dbReference>
<dbReference type="GeneTree" id="ENSGT00390000007539"/>
<dbReference type="HOGENOM" id="CLU_011280_2_0_1"/>
<dbReference type="InParanoid" id="Q9GZY0"/>
<dbReference type="OMA" id="CALQQFE"/>
<dbReference type="OrthoDB" id="25872at2759"/>
<dbReference type="PAN-GO" id="Q9GZY0">
    <property type="GO annotations" value="3 GO annotations based on evolutionary models"/>
</dbReference>
<dbReference type="PhylomeDB" id="Q9GZY0"/>
<dbReference type="TreeFam" id="TF314566"/>
<dbReference type="PathwayCommons" id="Q9GZY0"/>
<dbReference type="Reactome" id="R-HSA-159236">
    <property type="pathway name" value="Transport of Mature mRNA derived from an Intron-Containing Transcript"/>
</dbReference>
<dbReference type="SignaLink" id="Q9GZY0"/>
<dbReference type="BioGRID-ORCS" id="56001">
    <property type="hits" value="98 hits in 646 CRISPR screens"/>
</dbReference>
<dbReference type="BioGRID-ORCS" id="728343">
    <property type="hits" value="13 hits in 587 CRISPR screens"/>
</dbReference>
<dbReference type="ChiTaRS" id="NXF2B">
    <property type="organism name" value="human"/>
</dbReference>
<dbReference type="GeneWiki" id="NXF2"/>
<dbReference type="Pharos" id="Q9GZY0">
    <property type="development level" value="Tbio"/>
</dbReference>
<dbReference type="PRO" id="PR:Q9GZY0"/>
<dbReference type="Proteomes" id="UP000005640">
    <property type="component" value="Chromosome X"/>
</dbReference>
<dbReference type="RNAct" id="Q9GZY0">
    <property type="molecule type" value="protein"/>
</dbReference>
<dbReference type="Bgee" id="ENSG00000269405">
    <property type="expression patterns" value="Expressed in male germ line stem cell (sensu Vertebrata) in testis and 40 other cell types or tissues"/>
</dbReference>
<dbReference type="GO" id="GO:0005737">
    <property type="term" value="C:cytoplasm"/>
    <property type="evidence" value="ECO:0000250"/>
    <property type="project" value="UniProtKB"/>
</dbReference>
<dbReference type="GO" id="GO:0005829">
    <property type="term" value="C:cytosol"/>
    <property type="evidence" value="ECO:0000304"/>
    <property type="project" value="Reactome"/>
</dbReference>
<dbReference type="GO" id="GO:0042272">
    <property type="term" value="C:nuclear RNA export factor complex"/>
    <property type="evidence" value="ECO:0000353"/>
    <property type="project" value="ComplexPortal"/>
</dbReference>
<dbReference type="GO" id="GO:0005654">
    <property type="term" value="C:nucleoplasm"/>
    <property type="evidence" value="ECO:0000304"/>
    <property type="project" value="Reactome"/>
</dbReference>
<dbReference type="GO" id="GO:0005634">
    <property type="term" value="C:nucleus"/>
    <property type="evidence" value="ECO:0000250"/>
    <property type="project" value="UniProtKB"/>
</dbReference>
<dbReference type="GO" id="GO:0003723">
    <property type="term" value="F:RNA binding"/>
    <property type="evidence" value="ECO:0000314"/>
    <property type="project" value="MGI"/>
</dbReference>
<dbReference type="GO" id="GO:0006406">
    <property type="term" value="P:mRNA export from nucleus"/>
    <property type="evidence" value="ECO:0000250"/>
    <property type="project" value="ComplexPortal"/>
</dbReference>
<dbReference type="GO" id="GO:0016973">
    <property type="term" value="P:poly(A)+ mRNA export from nucleus"/>
    <property type="evidence" value="ECO:0000318"/>
    <property type="project" value="GO_Central"/>
</dbReference>
<dbReference type="GO" id="GO:0050658">
    <property type="term" value="P:RNA transport"/>
    <property type="evidence" value="ECO:0000250"/>
    <property type="project" value="UniProtKB"/>
</dbReference>
<dbReference type="CDD" id="cd14342">
    <property type="entry name" value="UBA_TAP-C"/>
    <property type="match status" value="1"/>
</dbReference>
<dbReference type="FunFam" id="1.10.8.10:FF:000018">
    <property type="entry name" value="Nuclear RNA export factor 1"/>
    <property type="match status" value="1"/>
</dbReference>
<dbReference type="FunFam" id="3.10.450.50:FF:000004">
    <property type="entry name" value="Nuclear RNA export factor 1"/>
    <property type="match status" value="1"/>
</dbReference>
<dbReference type="FunFam" id="3.30.70.330:FF:000165">
    <property type="entry name" value="nuclear RNA export factor 1"/>
    <property type="match status" value="1"/>
</dbReference>
<dbReference type="FunFam" id="3.80.10.10:FF:000183">
    <property type="entry name" value="nuclear RNA export factor 2-like"/>
    <property type="match status" value="1"/>
</dbReference>
<dbReference type="Gene3D" id="3.10.450.50">
    <property type="match status" value="1"/>
</dbReference>
<dbReference type="Gene3D" id="3.30.70.330">
    <property type="match status" value="1"/>
</dbReference>
<dbReference type="Gene3D" id="1.10.8.10">
    <property type="entry name" value="DNA helicase RuvA subunit, C-terminal domain"/>
    <property type="match status" value="1"/>
</dbReference>
<dbReference type="Gene3D" id="3.80.10.10">
    <property type="entry name" value="Ribonuclease Inhibitor"/>
    <property type="match status" value="1"/>
</dbReference>
<dbReference type="InterPro" id="IPR001611">
    <property type="entry name" value="Leu-rich_rpt"/>
</dbReference>
<dbReference type="InterPro" id="IPR032675">
    <property type="entry name" value="LRR_dom_sf"/>
</dbReference>
<dbReference type="InterPro" id="IPR032710">
    <property type="entry name" value="NTF2-like_dom_sf"/>
</dbReference>
<dbReference type="InterPro" id="IPR002075">
    <property type="entry name" value="NTF2_dom"/>
</dbReference>
<dbReference type="InterPro" id="IPR018222">
    <property type="entry name" value="Nuclear_transport_factor_2_euk"/>
</dbReference>
<dbReference type="InterPro" id="IPR012677">
    <property type="entry name" value="Nucleotide-bd_a/b_plait_sf"/>
</dbReference>
<dbReference type="InterPro" id="IPR030217">
    <property type="entry name" value="NXF_fam"/>
</dbReference>
<dbReference type="InterPro" id="IPR035979">
    <property type="entry name" value="RBD_domain_sf"/>
</dbReference>
<dbReference type="InterPro" id="IPR005637">
    <property type="entry name" value="TAP_C_dom"/>
</dbReference>
<dbReference type="InterPro" id="IPR015245">
    <property type="entry name" value="Tap_RNA-bd"/>
</dbReference>
<dbReference type="InterPro" id="IPR009060">
    <property type="entry name" value="UBA-like_sf"/>
</dbReference>
<dbReference type="PANTHER" id="PTHR10662">
    <property type="entry name" value="NUCLEAR RNA EXPORT FACTOR"/>
    <property type="match status" value="1"/>
</dbReference>
<dbReference type="PANTHER" id="PTHR10662:SF46">
    <property type="entry name" value="NUCLEAR RNA EXPORT FACTOR 2"/>
    <property type="match status" value="1"/>
</dbReference>
<dbReference type="Pfam" id="PF24048">
    <property type="entry name" value="LRR_NXF1-5"/>
    <property type="match status" value="1"/>
</dbReference>
<dbReference type="Pfam" id="PF22602">
    <property type="entry name" value="NXF_NTF2"/>
    <property type="match status" value="1"/>
</dbReference>
<dbReference type="Pfam" id="PF09162">
    <property type="entry name" value="Tap-RNA_bind"/>
    <property type="match status" value="1"/>
</dbReference>
<dbReference type="Pfam" id="PF03943">
    <property type="entry name" value="TAP_C"/>
    <property type="match status" value="1"/>
</dbReference>
<dbReference type="SMART" id="SM00804">
    <property type="entry name" value="TAP_C"/>
    <property type="match status" value="1"/>
</dbReference>
<dbReference type="SUPFAM" id="SSF52058">
    <property type="entry name" value="L domain-like"/>
    <property type="match status" value="1"/>
</dbReference>
<dbReference type="SUPFAM" id="SSF54427">
    <property type="entry name" value="NTF2-like"/>
    <property type="match status" value="1"/>
</dbReference>
<dbReference type="SUPFAM" id="SSF54928">
    <property type="entry name" value="RNA-binding domain, RBD"/>
    <property type="match status" value="1"/>
</dbReference>
<dbReference type="SUPFAM" id="SSF46934">
    <property type="entry name" value="UBA-like"/>
    <property type="match status" value="1"/>
</dbReference>
<dbReference type="PROSITE" id="PS51450">
    <property type="entry name" value="LRR"/>
    <property type="match status" value="3"/>
</dbReference>
<dbReference type="PROSITE" id="PS50177">
    <property type="entry name" value="NTF2_DOMAIN"/>
    <property type="match status" value="1"/>
</dbReference>
<dbReference type="PROSITE" id="PS51281">
    <property type="entry name" value="TAP_C"/>
    <property type="match status" value="1"/>
</dbReference>
<name>NXF2_HUMAN</name>
<proteinExistence type="evidence at protein level"/>
<keyword id="KW-0963">Cytoplasm</keyword>
<keyword id="KW-0433">Leucine-rich repeat</keyword>
<keyword id="KW-0509">mRNA transport</keyword>
<keyword id="KW-0539">Nucleus</keyword>
<keyword id="KW-0597">Phosphoprotein</keyword>
<keyword id="KW-1267">Proteomics identification</keyword>
<keyword id="KW-1185">Reference proteome</keyword>
<keyword id="KW-0677">Repeat</keyword>
<keyword id="KW-0694">RNA-binding</keyword>
<keyword id="KW-0813">Transport</keyword>
<feature type="chain" id="PRO_0000220533" description="Nuclear RNA export factor 2">
    <location>
        <begin position="1"/>
        <end position="626"/>
    </location>
</feature>
<feature type="domain" description="RRM">
    <location>
        <begin position="124"/>
        <end position="203"/>
    </location>
</feature>
<feature type="repeat" description="LRR 1">
    <location>
        <begin position="271"/>
        <end position="296"/>
    </location>
</feature>
<feature type="repeat" description="LRR 2">
    <location>
        <begin position="297"/>
        <end position="320"/>
    </location>
</feature>
<feature type="repeat" description="LRR 3">
    <location>
        <begin position="321"/>
        <end position="348"/>
    </location>
</feature>
<feature type="repeat" description="LRR 4">
    <location>
        <begin position="349"/>
        <end position="376"/>
    </location>
</feature>
<feature type="domain" description="NTF2" evidence="1">
    <location>
        <begin position="391"/>
        <end position="541"/>
    </location>
</feature>
<feature type="domain" description="TAP-C" evidence="2">
    <location>
        <begin position="570"/>
        <end position="625"/>
    </location>
</feature>
<feature type="modified residue" description="Phosphoserine" evidence="8">
    <location>
        <position position="34"/>
    </location>
</feature>
<feature type="mutagenesis site" description="Has no effect on FG-nucleoporin binding." evidence="4">
    <original>E</original>
    <variation>A</variation>
    <location>
        <position position="598"/>
    </location>
</feature>
<feature type="mutagenesis site" description="Suppresses FG-nucleoporin binding." evidence="4">
    <original>W</original>
    <variation>A</variation>
    <location>
        <position position="599"/>
    </location>
</feature>
<feature type="mutagenesis site" description="Has no effect on FG-nucleoporin binding." evidence="4">
    <original>N</original>
    <variation>A</variation>
    <location>
        <position position="600"/>
    </location>
</feature>
<accession>Q9GZY0</accession>
<accession>Q9BXU4</accession>
<accession>Q9NSS1</accession>
<accession>Q9NX66</accession>